<proteinExistence type="inferred from homology"/>
<name>Y31E_CAEEL</name>
<sequence>MGNVATRKRPGCHHHIGRNEENLDDDEDGPAKKRLRIGEPQAENEYQKLAFKSRLQKLKKCRPHLKRRTYKVEEADPRPPVPRFIVDDYGDYEKPEPTRKEFAIPWFEHLFLPEFPTRSVINEKSFVLERQLGRGSFGVVYCASAIHDSERKFAIKMQEKREIISKRAVLQVKREASIQRLLPSHPFIARTYSTWQTRTHLYSLLQYPTGSTGDLFSVWRQRGSLSEAAIRLIGAELASAIDFLHQNDVIYRDVKLENVVLDQWGHALLIDFGLAKKLKQGSSTGTICGTLQYMSPDVASGGTYSHYVDWWSLGVLLHILLTGIYPYPNSEATHHANLKFIDYSTPIGCSREFANLMDRMLAVSITHRLCSFTVLHAHPFFRSIDFSKLEQKDYTPAAEIGNAEYDTYHKSEDALDDALFKENYDVSCGRNVIFAVLPVFW</sequence>
<reference key="1">
    <citation type="journal article" date="1998" name="Science">
        <title>Genome sequence of the nematode C. elegans: a platform for investigating biology.</title>
        <authorList>
            <consortium name="The C. elegans sequencing consortium"/>
        </authorList>
    </citation>
    <scope>NUCLEOTIDE SEQUENCE [LARGE SCALE GENOMIC DNA]</scope>
    <scope>ALTERNATIVE SPLICING</scope>
    <source>
        <strain>Bristol N2</strain>
    </source>
</reference>
<comment type="catalytic activity">
    <reaction evidence="1">
        <text>L-seryl-[protein] + ATP = O-phospho-L-seryl-[protein] + ADP + H(+)</text>
        <dbReference type="Rhea" id="RHEA:17989"/>
        <dbReference type="Rhea" id="RHEA-COMP:9863"/>
        <dbReference type="Rhea" id="RHEA-COMP:11604"/>
        <dbReference type="ChEBI" id="CHEBI:15378"/>
        <dbReference type="ChEBI" id="CHEBI:29999"/>
        <dbReference type="ChEBI" id="CHEBI:30616"/>
        <dbReference type="ChEBI" id="CHEBI:83421"/>
        <dbReference type="ChEBI" id="CHEBI:456216"/>
        <dbReference type="EC" id="2.7.11.1"/>
    </reaction>
</comment>
<comment type="catalytic activity">
    <reaction evidence="1">
        <text>L-threonyl-[protein] + ATP = O-phospho-L-threonyl-[protein] + ADP + H(+)</text>
        <dbReference type="Rhea" id="RHEA:46608"/>
        <dbReference type="Rhea" id="RHEA-COMP:11060"/>
        <dbReference type="Rhea" id="RHEA-COMP:11605"/>
        <dbReference type="ChEBI" id="CHEBI:15378"/>
        <dbReference type="ChEBI" id="CHEBI:30013"/>
        <dbReference type="ChEBI" id="CHEBI:30616"/>
        <dbReference type="ChEBI" id="CHEBI:61977"/>
        <dbReference type="ChEBI" id="CHEBI:456216"/>
        <dbReference type="EC" id="2.7.11.1"/>
    </reaction>
</comment>
<comment type="alternative products">
    <event type="alternative splicing"/>
    <isoform>
        <id>Q8MYQ1-1</id>
        <name evidence="5">a</name>
        <sequence type="displayed"/>
    </isoform>
    <isoform>
        <id>Q8MYQ1-2</id>
        <name evidence="5">b</name>
        <sequence type="described" ref="VSP_051610"/>
    </isoform>
    <isoform>
        <id>Q8MYQ1-3</id>
        <name evidence="5">c</name>
        <sequence type="described" ref="VSP_051608 VSP_051609"/>
    </isoform>
</comment>
<comment type="similarity">
    <text evidence="2">Belongs to the protein kinase superfamily. Ser/Thr protein kinase family.</text>
</comment>
<feature type="chain" id="PRO_0000086827" description="Putative serine/threonine-protein kinase F31E3.2">
    <location>
        <begin position="1"/>
        <end position="441"/>
    </location>
</feature>
<feature type="domain" description="Protein kinase" evidence="2">
    <location>
        <begin position="126"/>
        <end position="381"/>
    </location>
</feature>
<feature type="region of interest" description="Disordered" evidence="4">
    <location>
        <begin position="1"/>
        <end position="41"/>
    </location>
</feature>
<feature type="compositionally biased region" description="Basic residues" evidence="4">
    <location>
        <begin position="1"/>
        <end position="16"/>
    </location>
</feature>
<feature type="active site" description="Proton acceptor" evidence="1 2 3">
    <location>
        <position position="253"/>
    </location>
</feature>
<feature type="binding site" evidence="1 2">
    <location>
        <begin position="132"/>
        <end position="140"/>
    </location>
    <ligand>
        <name>ATP</name>
        <dbReference type="ChEBI" id="CHEBI:30616"/>
    </ligand>
</feature>
<feature type="binding site" evidence="1 2">
    <location>
        <position position="156"/>
    </location>
    <ligand>
        <name>ATP</name>
        <dbReference type="ChEBI" id="CHEBI:30616"/>
    </ligand>
</feature>
<feature type="splice variant" id="VSP_051608" description="In isoform c." evidence="5">
    <original>PEPTRKEF</original>
    <variation>RMFCCIMR</variation>
    <location>
        <begin position="95"/>
        <end position="102"/>
    </location>
</feature>
<feature type="splice variant" id="VSP_051609" description="In isoform c." evidence="5">
    <location>
        <begin position="103"/>
        <end position="441"/>
    </location>
</feature>
<feature type="splice variant" id="VSP_051610" description="In isoform b." evidence="5">
    <original>VSCGRNVIFAVLPVFW</original>
    <variation>FDRFDYFNDRF</variation>
    <location>
        <begin position="426"/>
        <end position="441"/>
    </location>
</feature>
<protein>
    <recommendedName>
        <fullName>Putative serine/threonine-protein kinase F31E3.2</fullName>
        <ecNumber>2.7.11.1</ecNumber>
    </recommendedName>
</protein>
<evidence type="ECO:0000250" key="1">
    <source>
        <dbReference type="UniProtKB" id="P00517"/>
    </source>
</evidence>
<evidence type="ECO:0000255" key="2">
    <source>
        <dbReference type="PROSITE-ProRule" id="PRU00159"/>
    </source>
</evidence>
<evidence type="ECO:0000255" key="3">
    <source>
        <dbReference type="PROSITE-ProRule" id="PRU10027"/>
    </source>
</evidence>
<evidence type="ECO:0000256" key="4">
    <source>
        <dbReference type="SAM" id="MobiDB-lite"/>
    </source>
</evidence>
<evidence type="ECO:0000303" key="5">
    <source>
    </source>
</evidence>
<gene>
    <name type="ORF">F31E3.2</name>
</gene>
<organism>
    <name type="scientific">Caenorhabditis elegans</name>
    <dbReference type="NCBI Taxonomy" id="6239"/>
    <lineage>
        <taxon>Eukaryota</taxon>
        <taxon>Metazoa</taxon>
        <taxon>Ecdysozoa</taxon>
        <taxon>Nematoda</taxon>
        <taxon>Chromadorea</taxon>
        <taxon>Rhabditida</taxon>
        <taxon>Rhabditina</taxon>
        <taxon>Rhabditomorpha</taxon>
        <taxon>Rhabditoidea</taxon>
        <taxon>Rhabditidae</taxon>
        <taxon>Peloderinae</taxon>
        <taxon>Caenorhabditis</taxon>
    </lineage>
</organism>
<accession>Q8MYQ1</accession>
<accession>Q8MYQ2</accession>
<accession>Q95QH8</accession>
<dbReference type="EC" id="2.7.11.1"/>
<dbReference type="EMBL" id="FO080392">
    <property type="protein sequence ID" value="CCD63402.1"/>
    <property type="molecule type" value="Genomic_DNA"/>
</dbReference>
<dbReference type="EMBL" id="FO080392">
    <property type="protein sequence ID" value="CCD63403.1"/>
    <property type="molecule type" value="Genomic_DNA"/>
</dbReference>
<dbReference type="EMBL" id="FO080392">
    <property type="protein sequence ID" value="CCD63404.1"/>
    <property type="molecule type" value="Genomic_DNA"/>
</dbReference>
<dbReference type="RefSeq" id="NP_001022557.1">
    <molecule id="Q8MYQ1-2"/>
    <property type="nucleotide sequence ID" value="NM_001027386.6"/>
</dbReference>
<dbReference type="RefSeq" id="NP_001022558.1">
    <molecule id="Q8MYQ1-3"/>
    <property type="nucleotide sequence ID" value="NM_001027387.4"/>
</dbReference>
<dbReference type="RefSeq" id="NP_498522.3">
    <molecule id="Q8MYQ1-1"/>
    <property type="nucleotide sequence ID" value="NM_066121.4"/>
</dbReference>
<dbReference type="SMR" id="Q8MYQ1"/>
<dbReference type="BioGRID" id="41191">
    <property type="interactions" value="8"/>
</dbReference>
<dbReference type="DIP" id="DIP-25224N"/>
<dbReference type="FunCoup" id="Q8MYQ1">
    <property type="interactions" value="5"/>
</dbReference>
<dbReference type="IntAct" id="Q8MYQ1">
    <property type="interactions" value="5"/>
</dbReference>
<dbReference type="STRING" id="6239.F31E3.2a.1"/>
<dbReference type="PaxDb" id="6239-F31E3.2a"/>
<dbReference type="EnsemblMetazoa" id="F31E3.2a.1">
    <molecule id="Q8MYQ1-1"/>
    <property type="protein sequence ID" value="F31E3.2a.1"/>
    <property type="gene ID" value="WBGene00017950"/>
</dbReference>
<dbReference type="EnsemblMetazoa" id="F31E3.2b.1">
    <molecule id="Q8MYQ1-2"/>
    <property type="protein sequence ID" value="F31E3.2b.1"/>
    <property type="gene ID" value="WBGene00017950"/>
</dbReference>
<dbReference type="EnsemblMetazoa" id="F31E3.2c.1">
    <molecule id="Q8MYQ1-3"/>
    <property type="protein sequence ID" value="F31E3.2c.1"/>
    <property type="gene ID" value="WBGene00017950"/>
</dbReference>
<dbReference type="GeneID" id="175977"/>
<dbReference type="KEGG" id="cel:CELE_F31E3.2"/>
<dbReference type="UCSC" id="F31E3.2c">
    <molecule id="Q8MYQ1-1"/>
    <property type="organism name" value="c. elegans"/>
</dbReference>
<dbReference type="AGR" id="WB:WBGene00017950"/>
<dbReference type="CTD" id="175977"/>
<dbReference type="WormBase" id="F31E3.2a">
    <molecule id="Q8MYQ1-1"/>
    <property type="protein sequence ID" value="CE30773"/>
    <property type="gene ID" value="WBGene00017950"/>
</dbReference>
<dbReference type="WormBase" id="F31E3.2b">
    <molecule id="Q8MYQ1-2"/>
    <property type="protein sequence ID" value="CE30774"/>
    <property type="gene ID" value="WBGene00017950"/>
</dbReference>
<dbReference type="WormBase" id="F31E3.2c">
    <molecule id="Q8MYQ1-3"/>
    <property type="protein sequence ID" value="CE29301"/>
    <property type="gene ID" value="WBGene00017950"/>
</dbReference>
<dbReference type="eggNOG" id="KOG0694">
    <property type="taxonomic scope" value="Eukaryota"/>
</dbReference>
<dbReference type="GeneTree" id="ENSGT00940000160082"/>
<dbReference type="InParanoid" id="Q8MYQ1"/>
<dbReference type="OMA" id="YCASAIH"/>
<dbReference type="OrthoDB" id="3205605at2759"/>
<dbReference type="PhylomeDB" id="Q8MYQ1"/>
<dbReference type="PRO" id="PR:Q8MYQ1"/>
<dbReference type="Proteomes" id="UP000001940">
    <property type="component" value="Chromosome III"/>
</dbReference>
<dbReference type="Bgee" id="WBGene00017950">
    <property type="expression patterns" value="Expressed in pharyngeal muscle cell (C elegans) and 3 other cell types or tissues"/>
</dbReference>
<dbReference type="GO" id="GO:0005524">
    <property type="term" value="F:ATP binding"/>
    <property type="evidence" value="ECO:0007669"/>
    <property type="project" value="UniProtKB-KW"/>
</dbReference>
<dbReference type="GO" id="GO:0004672">
    <property type="term" value="F:protein kinase activity"/>
    <property type="evidence" value="ECO:0000318"/>
    <property type="project" value="GO_Central"/>
</dbReference>
<dbReference type="GO" id="GO:0106310">
    <property type="term" value="F:protein serine kinase activity"/>
    <property type="evidence" value="ECO:0007669"/>
    <property type="project" value="RHEA"/>
</dbReference>
<dbReference type="GO" id="GO:0004674">
    <property type="term" value="F:protein serine/threonine kinase activity"/>
    <property type="evidence" value="ECO:0007669"/>
    <property type="project" value="UniProtKB-KW"/>
</dbReference>
<dbReference type="CDD" id="cd05123">
    <property type="entry name" value="STKc_AGC"/>
    <property type="match status" value="1"/>
</dbReference>
<dbReference type="Gene3D" id="3.30.200.20">
    <property type="entry name" value="Phosphorylase Kinase, domain 1"/>
    <property type="match status" value="1"/>
</dbReference>
<dbReference type="Gene3D" id="1.10.510.10">
    <property type="entry name" value="Transferase(Phosphotransferase) domain 1"/>
    <property type="match status" value="1"/>
</dbReference>
<dbReference type="InterPro" id="IPR011009">
    <property type="entry name" value="Kinase-like_dom_sf"/>
</dbReference>
<dbReference type="InterPro" id="IPR000719">
    <property type="entry name" value="Prot_kinase_dom"/>
</dbReference>
<dbReference type="InterPro" id="IPR017441">
    <property type="entry name" value="Protein_kinase_ATP_BS"/>
</dbReference>
<dbReference type="InterPro" id="IPR008271">
    <property type="entry name" value="Ser/Thr_kinase_AS"/>
</dbReference>
<dbReference type="InterPro" id="IPR045270">
    <property type="entry name" value="STKc_AGC"/>
</dbReference>
<dbReference type="PANTHER" id="PTHR24355">
    <property type="entry name" value="G PROTEIN-COUPLED RECEPTOR KINASE/RIBOSOMAL PROTEIN S6 KINASE"/>
    <property type="match status" value="1"/>
</dbReference>
<dbReference type="PANTHER" id="PTHR24355:SF1">
    <property type="entry name" value="RIBOSOMAL PROTEIN S6 KINASE-RELATED PROTEIN"/>
    <property type="match status" value="1"/>
</dbReference>
<dbReference type="Pfam" id="PF00069">
    <property type="entry name" value="Pkinase"/>
    <property type="match status" value="1"/>
</dbReference>
<dbReference type="SMART" id="SM00220">
    <property type="entry name" value="S_TKc"/>
    <property type="match status" value="1"/>
</dbReference>
<dbReference type="SUPFAM" id="SSF56112">
    <property type="entry name" value="Protein kinase-like (PK-like)"/>
    <property type="match status" value="1"/>
</dbReference>
<dbReference type="PROSITE" id="PS00107">
    <property type="entry name" value="PROTEIN_KINASE_ATP"/>
    <property type="match status" value="1"/>
</dbReference>
<dbReference type="PROSITE" id="PS50011">
    <property type="entry name" value="PROTEIN_KINASE_DOM"/>
    <property type="match status" value="1"/>
</dbReference>
<dbReference type="PROSITE" id="PS00108">
    <property type="entry name" value="PROTEIN_KINASE_ST"/>
    <property type="match status" value="1"/>
</dbReference>
<keyword id="KW-0025">Alternative splicing</keyword>
<keyword id="KW-0067">ATP-binding</keyword>
<keyword id="KW-0418">Kinase</keyword>
<keyword id="KW-0547">Nucleotide-binding</keyword>
<keyword id="KW-1185">Reference proteome</keyword>
<keyword id="KW-0723">Serine/threonine-protein kinase</keyword>
<keyword id="KW-0808">Transferase</keyword>